<dbReference type="EMBL" id="BC098929">
    <property type="protein sequence ID" value="AAH98929.1"/>
    <property type="molecule type" value="mRNA"/>
</dbReference>
<dbReference type="RefSeq" id="NP_001032886.1">
    <property type="nucleotide sequence ID" value="NM_001037797.1"/>
</dbReference>
<dbReference type="RefSeq" id="NP_001406454.1">
    <property type="nucleotide sequence ID" value="NM_001419525.1"/>
</dbReference>
<dbReference type="RefSeq" id="XP_006237630.1">
    <property type="nucleotide sequence ID" value="XM_006237568.3"/>
</dbReference>
<dbReference type="RefSeq" id="XP_008761639.1">
    <property type="nucleotide sequence ID" value="XM_008763417.2"/>
</dbReference>
<dbReference type="RefSeq" id="XP_017448326.1">
    <property type="nucleotide sequence ID" value="XM_017592837.1"/>
</dbReference>
<dbReference type="RefSeq" id="XP_017448327.1">
    <property type="nucleotide sequence ID" value="XM_017592838.1"/>
</dbReference>
<dbReference type="RefSeq" id="XP_017448328.1">
    <property type="nucleotide sequence ID" value="XM_017592839.1"/>
</dbReference>
<dbReference type="SMR" id="Q4KLZ4"/>
<dbReference type="FunCoup" id="Q4KLZ4">
    <property type="interactions" value="22"/>
</dbReference>
<dbReference type="STRING" id="10116.ENSRNOP00000033325"/>
<dbReference type="iPTMnet" id="Q4KLZ4"/>
<dbReference type="PhosphoSitePlus" id="Q4KLZ4"/>
<dbReference type="PaxDb" id="10116-ENSRNOP00000033325"/>
<dbReference type="Ensembl" id="ENSRNOT00000032568.4">
    <property type="protein sequence ID" value="ENSRNOP00000033325.3"/>
    <property type="gene ID" value="ENSRNOG00000027979.4"/>
</dbReference>
<dbReference type="Ensembl" id="ENSRNOT00000102803.1">
    <property type="protein sequence ID" value="ENSRNOP00000096597.1"/>
    <property type="gene ID" value="ENSRNOG00000027979.4"/>
</dbReference>
<dbReference type="Ensembl" id="ENSRNOT00000114428.1">
    <property type="protein sequence ID" value="ENSRNOP00000082720.1"/>
    <property type="gene ID" value="ENSRNOG00000027979.4"/>
</dbReference>
<dbReference type="GeneID" id="500354"/>
<dbReference type="KEGG" id="rno:500354"/>
<dbReference type="UCSC" id="RGD:1563896">
    <property type="organism name" value="rat"/>
</dbReference>
<dbReference type="AGR" id="RGD:1563896"/>
<dbReference type="CTD" id="500354"/>
<dbReference type="RGD" id="1563896">
    <property type="gene designation" value="C4h12orf60"/>
</dbReference>
<dbReference type="eggNOG" id="ENOG502S734">
    <property type="taxonomic scope" value="Eukaryota"/>
</dbReference>
<dbReference type="GeneTree" id="ENSGT00390000003800"/>
<dbReference type="HOGENOM" id="CLU_1124225_0_0_1"/>
<dbReference type="InParanoid" id="Q4KLZ4"/>
<dbReference type="OMA" id="MKFPIMN"/>
<dbReference type="OrthoDB" id="6112619at2759"/>
<dbReference type="PhylomeDB" id="Q4KLZ4"/>
<dbReference type="TreeFam" id="TF338464"/>
<dbReference type="PRO" id="PR:Q4KLZ4"/>
<dbReference type="Proteomes" id="UP000002494">
    <property type="component" value="Chromosome 4"/>
</dbReference>
<dbReference type="Bgee" id="ENSRNOG00000027979">
    <property type="expression patterns" value="Expressed in testis and 2 other cell types or tissues"/>
</dbReference>
<dbReference type="InterPro" id="IPR027895">
    <property type="entry name" value="DUF4533"/>
</dbReference>
<dbReference type="PANTHER" id="PTHR36289">
    <property type="entry name" value="CHROMOSOME 12 OPEN READING FRAME 60"/>
    <property type="match status" value="1"/>
</dbReference>
<dbReference type="PANTHER" id="PTHR36289:SF1">
    <property type="entry name" value="CHROMOSOME 12 OPEN READING FRAME 60"/>
    <property type="match status" value="1"/>
</dbReference>
<dbReference type="Pfam" id="PF15047">
    <property type="entry name" value="DUF4533"/>
    <property type="match status" value="1"/>
</dbReference>
<name>CL060_RAT</name>
<feature type="chain" id="PRO_0000274273" description="Uncharacterized protein C12orf60 homolog">
    <location>
        <begin position="1"/>
        <end position="243"/>
    </location>
</feature>
<feature type="region of interest" description="Disordered" evidence="1">
    <location>
        <begin position="157"/>
        <end position="181"/>
    </location>
</feature>
<accession>Q4KLZ4</accession>
<evidence type="ECO:0000256" key="1">
    <source>
        <dbReference type="SAM" id="MobiDB-lite"/>
    </source>
</evidence>
<protein>
    <recommendedName>
        <fullName>Uncharacterized protein C12orf60 homolog</fullName>
    </recommendedName>
</protein>
<keyword id="KW-1185">Reference proteome</keyword>
<organism>
    <name type="scientific">Rattus norvegicus</name>
    <name type="common">Rat</name>
    <dbReference type="NCBI Taxonomy" id="10116"/>
    <lineage>
        <taxon>Eukaryota</taxon>
        <taxon>Metazoa</taxon>
        <taxon>Chordata</taxon>
        <taxon>Craniata</taxon>
        <taxon>Vertebrata</taxon>
        <taxon>Euteleostomi</taxon>
        <taxon>Mammalia</taxon>
        <taxon>Eutheria</taxon>
        <taxon>Euarchontoglires</taxon>
        <taxon>Glires</taxon>
        <taxon>Rodentia</taxon>
        <taxon>Myomorpha</taxon>
        <taxon>Muroidea</taxon>
        <taxon>Muridae</taxon>
        <taxon>Murinae</taxon>
        <taxon>Rattus</taxon>
    </lineage>
</organism>
<sequence>MSSESEKGQERLIQAAKLFSCHIQDLVSFINRFIELFNLTMKTQILPMSLNEESCIKDFLEQMIENFKEMQLMADVKQKEMQKEPLCSKVVTEVTSAGGKCADLSPHHMAEEMLKTIQTSGAALVPKTSHILGSLETSLSLLMQFPIMGLRLSDFHSEETKEQPDATTSEKSRSPECPKTTKEEALKRLQDMLCPENAHKPLETAAEELEQFIKTMDMTLQVLRKSIKTMEGNSCVLTQVQGK</sequence>
<reference key="1">
    <citation type="journal article" date="2004" name="Genome Res.">
        <title>The status, quality, and expansion of the NIH full-length cDNA project: the Mammalian Gene Collection (MGC).</title>
        <authorList>
            <consortium name="The MGC Project Team"/>
        </authorList>
    </citation>
    <scope>NUCLEOTIDE SEQUENCE [LARGE SCALE MRNA]</scope>
    <source>
        <tissue>Testis</tissue>
    </source>
</reference>
<proteinExistence type="evidence at transcript level"/>